<sequence length="337" mass="37807">MGKDYYCILGIEKGASDEDIKKAYRKQALKFHPDKNKSPQAEEKFKEVAEAYEVLSDPKKREIYDQFGEEGLKGGAGGTDGQGGTFRYTFHGDPHATFAAFFGGSNPFEIFFGRRMGGGRDSEEMEIDGDPFSAFGFSMNGYPRDRNSVGPSRLKQDPPVIHELRVSLEEIYSGCTKRMKISRKRLNADGRSYRSEDKILTIEIKKGWKEGTKITFPREGDETPNSIPADIVFIIKDKDHPKFKRDGSNIIYTAKISLREALCGCSINVPTLDGRNIPMSVNDIVKPGMRRRIIGYGLPFPKNPDQRGDLLIEFEVSFPDTISSSSKEVLRKHLPAS</sequence>
<evidence type="ECO:0000255" key="1">
    <source>
        <dbReference type="PROSITE-ProRule" id="PRU00286"/>
    </source>
</evidence>
<evidence type="ECO:0000269" key="2">
    <source>
    </source>
</evidence>
<evidence type="ECO:0000269" key="3">
    <source>
    </source>
</evidence>
<evidence type="ECO:0000269" key="4">
    <source>
    </source>
</evidence>
<evidence type="ECO:0000269" key="5">
    <source>
    </source>
</evidence>
<evidence type="ECO:0000269" key="6">
    <source>
    </source>
</evidence>
<evidence type="ECO:0000269" key="7">
    <source>
    </source>
</evidence>
<evidence type="ECO:0000269" key="8">
    <source>
    </source>
</evidence>
<evidence type="ECO:0000269" key="9">
    <source ref="6"/>
</evidence>
<evidence type="ECO:0007744" key="10">
    <source>
    </source>
</evidence>
<evidence type="ECO:0007744" key="11">
    <source>
    </source>
</evidence>
<gene>
    <name type="primary">DNAJB4</name>
    <name type="synonym">DNAJW</name>
    <name type="synonym">HLJ1</name>
</gene>
<dbReference type="EMBL" id="U40992">
    <property type="protein sequence ID" value="AAC14483.2"/>
    <property type="molecule type" value="mRNA"/>
</dbReference>
<dbReference type="EMBL" id="AK313205">
    <property type="protein sequence ID" value="BAG36021.1"/>
    <property type="molecule type" value="mRNA"/>
</dbReference>
<dbReference type="EMBL" id="CH471059">
    <property type="protein sequence ID" value="EAX06354.1"/>
    <property type="molecule type" value="Genomic_DNA"/>
</dbReference>
<dbReference type="EMBL" id="BC034721">
    <property type="protein sequence ID" value="AAH34721.1"/>
    <property type="molecule type" value="mRNA"/>
</dbReference>
<dbReference type="EMBL" id="U41290">
    <property type="protein sequence ID" value="AAB07346.1"/>
    <property type="status" value="ALT_FRAME"/>
    <property type="molecule type" value="Genomic_DNA"/>
</dbReference>
<dbReference type="CCDS" id="CCDS684.1"/>
<dbReference type="PIR" id="G02272">
    <property type="entry name" value="G02272"/>
</dbReference>
<dbReference type="RefSeq" id="NP_001304028.1">
    <property type="nucleotide sequence ID" value="NM_001317099.2"/>
</dbReference>
<dbReference type="RefSeq" id="NP_001304029.1">
    <property type="nucleotide sequence ID" value="NM_001317100.1"/>
</dbReference>
<dbReference type="RefSeq" id="NP_001304030.1">
    <property type="nucleotide sequence ID" value="NM_001317101.1"/>
</dbReference>
<dbReference type="RefSeq" id="NP_001304031.1">
    <property type="nucleotide sequence ID" value="NM_001317102.1"/>
</dbReference>
<dbReference type="RefSeq" id="NP_001304032.1">
    <property type="nucleotide sequence ID" value="NM_001317103.1"/>
</dbReference>
<dbReference type="RefSeq" id="NP_008965.2">
    <property type="nucleotide sequence ID" value="NM_007034.4"/>
</dbReference>
<dbReference type="SMR" id="Q9UDY4"/>
<dbReference type="BioGRID" id="116263">
    <property type="interactions" value="166"/>
</dbReference>
<dbReference type="FunCoup" id="Q9UDY4">
    <property type="interactions" value="2538"/>
</dbReference>
<dbReference type="IntAct" id="Q9UDY4">
    <property type="interactions" value="101"/>
</dbReference>
<dbReference type="MINT" id="Q9UDY4"/>
<dbReference type="STRING" id="9606.ENSP00000359799"/>
<dbReference type="GlyGen" id="Q9UDY4">
    <property type="glycosylation" value="1 site, 1 O-linked glycan (1 site)"/>
</dbReference>
<dbReference type="iPTMnet" id="Q9UDY4"/>
<dbReference type="PhosphoSitePlus" id="Q9UDY4"/>
<dbReference type="BioMuta" id="DNAJB4"/>
<dbReference type="DMDM" id="8928155"/>
<dbReference type="jPOST" id="Q9UDY4"/>
<dbReference type="MassIVE" id="Q9UDY4"/>
<dbReference type="PaxDb" id="9606-ENSP00000359799"/>
<dbReference type="PeptideAtlas" id="Q9UDY4"/>
<dbReference type="ProteomicsDB" id="84132"/>
<dbReference type="Pumba" id="Q9UDY4"/>
<dbReference type="Antibodypedia" id="33498">
    <property type="antibodies" value="269 antibodies from 31 providers"/>
</dbReference>
<dbReference type="DNASU" id="11080"/>
<dbReference type="Ensembl" id="ENST00000370763.6">
    <property type="protein sequence ID" value="ENSP00000359799.5"/>
    <property type="gene ID" value="ENSG00000162616.9"/>
</dbReference>
<dbReference type="GeneID" id="11080"/>
<dbReference type="KEGG" id="hsa:11080"/>
<dbReference type="MANE-Select" id="ENST00000370763.6">
    <property type="protein sequence ID" value="ENSP00000359799.5"/>
    <property type="RefSeq nucleotide sequence ID" value="NM_007034.5"/>
    <property type="RefSeq protein sequence ID" value="NP_008965.2"/>
</dbReference>
<dbReference type="UCSC" id="uc001dij.4">
    <property type="organism name" value="human"/>
</dbReference>
<dbReference type="AGR" id="HGNC:14886"/>
<dbReference type="CTD" id="11080"/>
<dbReference type="DisGeNET" id="11080"/>
<dbReference type="GeneCards" id="DNAJB4"/>
<dbReference type="HGNC" id="HGNC:14886">
    <property type="gene designation" value="DNAJB4"/>
</dbReference>
<dbReference type="HPA" id="ENSG00000162616">
    <property type="expression patterns" value="Low tissue specificity"/>
</dbReference>
<dbReference type="MalaCards" id="DNAJB4"/>
<dbReference type="MIM" id="611327">
    <property type="type" value="gene"/>
</dbReference>
<dbReference type="MIM" id="620326">
    <property type="type" value="phenotype"/>
</dbReference>
<dbReference type="neXtProt" id="NX_Q9UDY4"/>
<dbReference type="OpenTargets" id="ENSG00000162616"/>
<dbReference type="PharmGKB" id="PA27416"/>
<dbReference type="VEuPathDB" id="HostDB:ENSG00000162616"/>
<dbReference type="eggNOG" id="KOG0714">
    <property type="taxonomic scope" value="Eukaryota"/>
</dbReference>
<dbReference type="GeneTree" id="ENSGT00940000156826"/>
<dbReference type="HOGENOM" id="CLU_017633_0_0_1"/>
<dbReference type="InParanoid" id="Q9UDY4"/>
<dbReference type="OMA" id="MPIRKEG"/>
<dbReference type="OrthoDB" id="550424at2759"/>
<dbReference type="PAN-GO" id="Q9UDY4">
    <property type="GO annotations" value="4 GO annotations based on evolutionary models"/>
</dbReference>
<dbReference type="PhylomeDB" id="Q9UDY4"/>
<dbReference type="TreeFam" id="TF105141"/>
<dbReference type="PathwayCommons" id="Q9UDY4"/>
<dbReference type="SignaLink" id="Q9UDY4"/>
<dbReference type="BioGRID-ORCS" id="11080">
    <property type="hits" value="9 hits in 1151 CRISPR screens"/>
</dbReference>
<dbReference type="CD-CODE" id="91857CE7">
    <property type="entry name" value="Nucleolus"/>
</dbReference>
<dbReference type="CD-CODE" id="FB4E32DD">
    <property type="entry name" value="Presynaptic clusters and postsynaptic densities"/>
</dbReference>
<dbReference type="ChiTaRS" id="DNAJB4">
    <property type="organism name" value="human"/>
</dbReference>
<dbReference type="GeneWiki" id="DNAJB4"/>
<dbReference type="GenomeRNAi" id="11080"/>
<dbReference type="Pharos" id="Q9UDY4">
    <property type="development level" value="Tbio"/>
</dbReference>
<dbReference type="PRO" id="PR:Q9UDY4"/>
<dbReference type="Proteomes" id="UP000005640">
    <property type="component" value="Chromosome 1"/>
</dbReference>
<dbReference type="RNAct" id="Q9UDY4">
    <property type="molecule type" value="protein"/>
</dbReference>
<dbReference type="Bgee" id="ENSG00000162616">
    <property type="expression patterns" value="Expressed in skeletal muscle tissue of rectus abdominis and 211 other cell types or tissues"/>
</dbReference>
<dbReference type="ExpressionAtlas" id="Q9UDY4">
    <property type="expression patterns" value="baseline and differential"/>
</dbReference>
<dbReference type="GO" id="GO:0005829">
    <property type="term" value="C:cytosol"/>
    <property type="evidence" value="ECO:0000314"/>
    <property type="project" value="UniProtKB"/>
</dbReference>
<dbReference type="GO" id="GO:0005654">
    <property type="term" value="C:nucleoplasm"/>
    <property type="evidence" value="ECO:0000314"/>
    <property type="project" value="HPA"/>
</dbReference>
<dbReference type="GO" id="GO:0005886">
    <property type="term" value="C:plasma membrane"/>
    <property type="evidence" value="ECO:0000314"/>
    <property type="project" value="HPA"/>
</dbReference>
<dbReference type="GO" id="GO:0030018">
    <property type="term" value="C:Z disc"/>
    <property type="evidence" value="ECO:0000314"/>
    <property type="project" value="UniProtKB"/>
</dbReference>
<dbReference type="GO" id="GO:0001671">
    <property type="term" value="F:ATPase activator activity"/>
    <property type="evidence" value="ECO:0000314"/>
    <property type="project" value="UniProtKB"/>
</dbReference>
<dbReference type="GO" id="GO:0051087">
    <property type="term" value="F:protein-folding chaperone binding"/>
    <property type="evidence" value="ECO:0000353"/>
    <property type="project" value="UniProtKB"/>
</dbReference>
<dbReference type="GO" id="GO:0051082">
    <property type="term" value="F:unfolded protein binding"/>
    <property type="evidence" value="ECO:0000318"/>
    <property type="project" value="GO_Central"/>
</dbReference>
<dbReference type="GO" id="GO:0051085">
    <property type="term" value="P:chaperone cofactor-dependent protein refolding"/>
    <property type="evidence" value="ECO:0000318"/>
    <property type="project" value="GO_Central"/>
</dbReference>
<dbReference type="GO" id="GO:0000122">
    <property type="term" value="P:negative regulation of transcription by RNA polymerase II"/>
    <property type="evidence" value="ECO:0000318"/>
    <property type="project" value="GO_Central"/>
</dbReference>
<dbReference type="GO" id="GO:0009408">
    <property type="term" value="P:response to heat"/>
    <property type="evidence" value="ECO:0000304"/>
    <property type="project" value="ProtInc"/>
</dbReference>
<dbReference type="GO" id="GO:0006986">
    <property type="term" value="P:response to unfolded protein"/>
    <property type="evidence" value="ECO:0000304"/>
    <property type="project" value="ProtInc"/>
</dbReference>
<dbReference type="CDD" id="cd06257">
    <property type="entry name" value="DnaJ"/>
    <property type="match status" value="1"/>
</dbReference>
<dbReference type="CDD" id="cd10747">
    <property type="entry name" value="DnaJ_C"/>
    <property type="match status" value="1"/>
</dbReference>
<dbReference type="FunFam" id="1.10.287.110:FF:000005">
    <property type="entry name" value="DnaJ (Hsp40) homolog, subfamily B, member 4"/>
    <property type="match status" value="1"/>
</dbReference>
<dbReference type="FunFam" id="2.60.260.20:FF:000002">
    <property type="entry name" value="Dnaj homolog subfamily b member"/>
    <property type="match status" value="1"/>
</dbReference>
<dbReference type="FunFam" id="2.60.260.20:FF:000007">
    <property type="entry name" value="dnaJ homolog subfamily B member 5"/>
    <property type="match status" value="1"/>
</dbReference>
<dbReference type="Gene3D" id="1.10.287.110">
    <property type="entry name" value="DnaJ domain"/>
    <property type="match status" value="1"/>
</dbReference>
<dbReference type="Gene3D" id="2.60.260.20">
    <property type="entry name" value="Urease metallochaperone UreE, N-terminal domain"/>
    <property type="match status" value="2"/>
</dbReference>
<dbReference type="InterPro" id="IPR002939">
    <property type="entry name" value="DnaJ_C"/>
</dbReference>
<dbReference type="InterPro" id="IPR001623">
    <property type="entry name" value="DnaJ_domain"/>
</dbReference>
<dbReference type="InterPro" id="IPR018253">
    <property type="entry name" value="DnaJ_domain_CS"/>
</dbReference>
<dbReference type="InterPro" id="IPR051339">
    <property type="entry name" value="DnaJ_subfamily_B"/>
</dbReference>
<dbReference type="InterPro" id="IPR008971">
    <property type="entry name" value="HSP40/DnaJ_pept-bd"/>
</dbReference>
<dbReference type="InterPro" id="IPR036869">
    <property type="entry name" value="J_dom_sf"/>
</dbReference>
<dbReference type="PANTHER" id="PTHR24078:SF288">
    <property type="entry name" value="DNAJ HOMOLOG SUBFAMILY B MEMBER 4"/>
    <property type="match status" value="1"/>
</dbReference>
<dbReference type="PANTHER" id="PTHR24078">
    <property type="entry name" value="DNAJ HOMOLOG SUBFAMILY C MEMBER"/>
    <property type="match status" value="1"/>
</dbReference>
<dbReference type="Pfam" id="PF00226">
    <property type="entry name" value="DnaJ"/>
    <property type="match status" value="1"/>
</dbReference>
<dbReference type="Pfam" id="PF01556">
    <property type="entry name" value="DnaJ_C"/>
    <property type="match status" value="1"/>
</dbReference>
<dbReference type="PRINTS" id="PR00625">
    <property type="entry name" value="JDOMAIN"/>
</dbReference>
<dbReference type="SMART" id="SM00271">
    <property type="entry name" value="DnaJ"/>
    <property type="match status" value="1"/>
</dbReference>
<dbReference type="SUPFAM" id="SSF46565">
    <property type="entry name" value="Chaperone J-domain"/>
    <property type="match status" value="1"/>
</dbReference>
<dbReference type="SUPFAM" id="SSF49493">
    <property type="entry name" value="HSP40/DnaJ peptide-binding domain"/>
    <property type="match status" value="2"/>
</dbReference>
<dbReference type="PROSITE" id="PS00636">
    <property type="entry name" value="DNAJ_1"/>
    <property type="match status" value="1"/>
</dbReference>
<dbReference type="PROSITE" id="PS50076">
    <property type="entry name" value="DNAJ_2"/>
    <property type="match status" value="1"/>
</dbReference>
<accession>Q9UDY4</accession>
<accession>B2R824</accession>
<accession>Q13431</accession>
<reference key="1">
    <citation type="journal article" date="1998" name="Biochim. Biophys. Acta">
        <title>Isolation of a new member of DnaJ-like heat shock protein 40 (Hsp40) from human liver.</title>
        <authorList>
            <person name="Hoe K.L."/>
            <person name="Won M."/>
            <person name="Chung K.S."/>
            <person name="Jang Y.J."/>
            <person name="Lee S.B."/>
            <person name="Kim D.U."/>
            <person name="Lee J.W."/>
            <person name="Yun J.H."/>
            <person name="Yoo H.S."/>
        </authorList>
    </citation>
    <scope>NUCLEOTIDE SEQUENCE [MRNA]</scope>
    <scope>INDUCTION</scope>
    <scope>TISSUE SPECIFICITY</scope>
    <source>
        <tissue>Liver</tissue>
    </source>
</reference>
<reference key="2">
    <citation type="journal article" date="2004" name="Nat. Genet.">
        <title>Complete sequencing and characterization of 21,243 full-length human cDNAs.</title>
        <authorList>
            <person name="Ota T."/>
            <person name="Suzuki Y."/>
            <person name="Nishikawa T."/>
            <person name="Otsuki T."/>
            <person name="Sugiyama T."/>
            <person name="Irie R."/>
            <person name="Wakamatsu A."/>
            <person name="Hayashi K."/>
            <person name="Sato H."/>
            <person name="Nagai K."/>
            <person name="Kimura K."/>
            <person name="Makita H."/>
            <person name="Sekine M."/>
            <person name="Obayashi M."/>
            <person name="Nishi T."/>
            <person name="Shibahara T."/>
            <person name="Tanaka T."/>
            <person name="Ishii S."/>
            <person name="Yamamoto J."/>
            <person name="Saito K."/>
            <person name="Kawai Y."/>
            <person name="Isono Y."/>
            <person name="Nakamura Y."/>
            <person name="Nagahari K."/>
            <person name="Murakami K."/>
            <person name="Yasuda T."/>
            <person name="Iwayanagi T."/>
            <person name="Wagatsuma M."/>
            <person name="Shiratori A."/>
            <person name="Sudo H."/>
            <person name="Hosoiri T."/>
            <person name="Kaku Y."/>
            <person name="Kodaira H."/>
            <person name="Kondo H."/>
            <person name="Sugawara M."/>
            <person name="Takahashi M."/>
            <person name="Kanda K."/>
            <person name="Yokoi T."/>
            <person name="Furuya T."/>
            <person name="Kikkawa E."/>
            <person name="Omura Y."/>
            <person name="Abe K."/>
            <person name="Kamihara K."/>
            <person name="Katsuta N."/>
            <person name="Sato K."/>
            <person name="Tanikawa M."/>
            <person name="Yamazaki M."/>
            <person name="Ninomiya K."/>
            <person name="Ishibashi T."/>
            <person name="Yamashita H."/>
            <person name="Murakawa K."/>
            <person name="Fujimori K."/>
            <person name="Tanai H."/>
            <person name="Kimata M."/>
            <person name="Watanabe M."/>
            <person name="Hiraoka S."/>
            <person name="Chiba Y."/>
            <person name="Ishida S."/>
            <person name="Ono Y."/>
            <person name="Takiguchi S."/>
            <person name="Watanabe S."/>
            <person name="Yosida M."/>
            <person name="Hotuta T."/>
            <person name="Kusano J."/>
            <person name="Kanehori K."/>
            <person name="Takahashi-Fujii A."/>
            <person name="Hara H."/>
            <person name="Tanase T.-O."/>
            <person name="Nomura Y."/>
            <person name="Togiya S."/>
            <person name="Komai F."/>
            <person name="Hara R."/>
            <person name="Takeuchi K."/>
            <person name="Arita M."/>
            <person name="Imose N."/>
            <person name="Musashino K."/>
            <person name="Yuuki H."/>
            <person name="Oshima A."/>
            <person name="Sasaki N."/>
            <person name="Aotsuka S."/>
            <person name="Yoshikawa Y."/>
            <person name="Matsunawa H."/>
            <person name="Ichihara T."/>
            <person name="Shiohata N."/>
            <person name="Sano S."/>
            <person name="Moriya S."/>
            <person name="Momiyama H."/>
            <person name="Satoh N."/>
            <person name="Takami S."/>
            <person name="Terashima Y."/>
            <person name="Suzuki O."/>
            <person name="Nakagawa S."/>
            <person name="Senoh A."/>
            <person name="Mizoguchi H."/>
            <person name="Goto Y."/>
            <person name="Shimizu F."/>
            <person name="Wakebe H."/>
            <person name="Hishigaki H."/>
            <person name="Watanabe T."/>
            <person name="Sugiyama A."/>
            <person name="Takemoto M."/>
            <person name="Kawakami B."/>
            <person name="Yamazaki M."/>
            <person name="Watanabe K."/>
            <person name="Kumagai A."/>
            <person name="Itakura S."/>
            <person name="Fukuzumi Y."/>
            <person name="Fujimori Y."/>
            <person name="Komiyama M."/>
            <person name="Tashiro H."/>
            <person name="Tanigami A."/>
            <person name="Fujiwara T."/>
            <person name="Ono T."/>
            <person name="Yamada K."/>
            <person name="Fujii Y."/>
            <person name="Ozaki K."/>
            <person name="Hirao M."/>
            <person name="Ohmori Y."/>
            <person name="Kawabata A."/>
            <person name="Hikiji T."/>
            <person name="Kobatake N."/>
            <person name="Inagaki H."/>
            <person name="Ikema Y."/>
            <person name="Okamoto S."/>
            <person name="Okitani R."/>
            <person name="Kawakami T."/>
            <person name="Noguchi S."/>
            <person name="Itoh T."/>
            <person name="Shigeta K."/>
            <person name="Senba T."/>
            <person name="Matsumura K."/>
            <person name="Nakajima Y."/>
            <person name="Mizuno T."/>
            <person name="Morinaga M."/>
            <person name="Sasaki M."/>
            <person name="Togashi T."/>
            <person name="Oyama M."/>
            <person name="Hata H."/>
            <person name="Watanabe M."/>
            <person name="Komatsu T."/>
            <person name="Mizushima-Sugano J."/>
            <person name="Satoh T."/>
            <person name="Shirai Y."/>
            <person name="Takahashi Y."/>
            <person name="Nakagawa K."/>
            <person name="Okumura K."/>
            <person name="Nagase T."/>
            <person name="Nomura N."/>
            <person name="Kikuchi H."/>
            <person name="Masuho Y."/>
            <person name="Yamashita R."/>
            <person name="Nakai K."/>
            <person name="Yada T."/>
            <person name="Nakamura Y."/>
            <person name="Ohara O."/>
            <person name="Isogai T."/>
            <person name="Sugano S."/>
        </authorList>
    </citation>
    <scope>NUCLEOTIDE SEQUENCE [LARGE SCALE MRNA]</scope>
</reference>
<reference key="3">
    <citation type="submission" date="2005-09" db="EMBL/GenBank/DDBJ databases">
        <authorList>
            <person name="Mural R.J."/>
            <person name="Istrail S."/>
            <person name="Sutton G.G."/>
            <person name="Florea L."/>
            <person name="Halpern A.L."/>
            <person name="Mobarry C.M."/>
            <person name="Lippert R."/>
            <person name="Walenz B."/>
            <person name="Shatkay H."/>
            <person name="Dew I."/>
            <person name="Miller J.R."/>
            <person name="Flanigan M.J."/>
            <person name="Edwards N.J."/>
            <person name="Bolanos R."/>
            <person name="Fasulo D."/>
            <person name="Halldorsson B.V."/>
            <person name="Hannenhalli S."/>
            <person name="Turner R."/>
            <person name="Yooseph S."/>
            <person name="Lu F."/>
            <person name="Nusskern D.R."/>
            <person name="Shue B.C."/>
            <person name="Zheng X.H."/>
            <person name="Zhong F."/>
            <person name="Delcher A.L."/>
            <person name="Huson D.H."/>
            <person name="Kravitz S.A."/>
            <person name="Mouchard L."/>
            <person name="Reinert K."/>
            <person name="Remington K.A."/>
            <person name="Clark A.G."/>
            <person name="Waterman M.S."/>
            <person name="Eichler E.E."/>
            <person name="Adams M.D."/>
            <person name="Hunkapiller M.W."/>
            <person name="Myers E.W."/>
            <person name="Venter J.C."/>
        </authorList>
    </citation>
    <scope>NUCLEOTIDE SEQUENCE [LARGE SCALE GENOMIC DNA]</scope>
</reference>
<reference key="4">
    <citation type="journal article" date="2004" name="Genome Res.">
        <title>The status, quality, and expansion of the NIH full-length cDNA project: the Mammalian Gene Collection (MGC).</title>
        <authorList>
            <consortium name="The MGC Project Team"/>
        </authorList>
    </citation>
    <scope>NUCLEOTIDE SEQUENCE [LARGE SCALE MRNA]</scope>
    <source>
        <tissue>Lymph</tissue>
    </source>
</reference>
<reference key="5">
    <citation type="submission" date="1995-11" db="EMBL/GenBank/DDBJ databases">
        <authorList>
            <person name="Won M."/>
            <person name="Moon K.-M."/>
            <person name="Lee C.-E."/>
            <person name="Yoo H.-S."/>
        </authorList>
    </citation>
    <scope>PRELIMINARY NUCLEOTIDE SEQUENCE [GENOMIC DNA]</scope>
    <source>
        <tissue>Liver</tissue>
    </source>
</reference>
<reference key="6">
    <citation type="submission" date="2009-03" db="UniProtKB">
        <authorList>
            <person name="Bienvenut W.V."/>
            <person name="Waridel P."/>
            <person name="Quadroni M."/>
        </authorList>
    </citation>
    <scope>PROTEIN SEQUENCE OF 2-13; 45-59; 166-177; 219-236; 260-275 AND 293-302</scope>
    <scope>CLEAVAGE OF INITIATOR METHIONINE</scope>
    <scope>IDENTIFICATION BY MASS SPECTROMETRY</scope>
    <source>
        <tissue>Embryonic kidney</tissue>
    </source>
</reference>
<reference key="7">
    <citation type="journal article" date="2005" name="J. Biol. Chem.">
        <title>Low resolution structural study of two human HSP40 chaperones in solution. DJA1 from subfamily A and DJB4 from subfamily B have different quaternary structures.</title>
        <authorList>
            <person name="Borges J.C."/>
            <person name="Fischer H."/>
            <person name="Craievich A.F."/>
            <person name="Ramos C.H.I."/>
        </authorList>
    </citation>
    <scope>HOMODIMERIZATION</scope>
</reference>
<reference key="8">
    <citation type="journal article" date="2006" name="Brain Res.">
        <title>A member of the heat shock protein 40 family, hlj1, binds to the carboxyl tail of the human mu opioid receptor.</title>
        <authorList>
            <person name="Ancevska-Taneva N."/>
            <person name="Onoprishvili I."/>
            <person name="Andria M.L."/>
            <person name="Hiller J.M."/>
            <person name="Simon E.J."/>
        </authorList>
    </citation>
    <scope>SUBCELLULAR LOCATION</scope>
    <scope>INTERACTION WITH OPRM1</scope>
</reference>
<reference key="9">
    <citation type="journal article" date="2008" name="Proc. Natl. Acad. Sci. U.S.A.">
        <title>A quantitative atlas of mitotic phosphorylation.</title>
        <authorList>
            <person name="Dephoure N."/>
            <person name="Zhou C."/>
            <person name="Villen J."/>
            <person name="Beausoleil S.A."/>
            <person name="Bakalarski C.E."/>
            <person name="Elledge S.J."/>
            <person name="Gygi S.P."/>
        </authorList>
    </citation>
    <scope>PHOSPHORYLATION [LARGE SCALE ANALYSIS] AT SER-122</scope>
    <scope>IDENTIFICATION BY MASS SPECTROMETRY [LARGE SCALE ANALYSIS]</scope>
    <source>
        <tissue>Cervix carcinoma</tissue>
    </source>
</reference>
<reference key="10">
    <citation type="journal article" date="2008" name="Sheng Wu Gong Cheng Xue Bao">
        <title>Preparation of the anti-HLJ1 monoclonal antibodies and establishment of method for detection of the antigen.</title>
        <authorList>
            <person name="Lin X."/>
            <person name="Ma L."/>
            <person name="Wang J."/>
            <person name="Tan Y."/>
            <person name="Wen Q."/>
            <person name="Luo W."/>
            <person name="Su J."/>
            <person name="Lin Y."/>
            <person name="Wang X."/>
        </authorList>
    </citation>
    <scope>SUBCELLULAR LOCATION</scope>
</reference>
<reference key="11">
    <citation type="journal article" date="2010" name="Sci. Signal.">
        <title>Quantitative phosphoproteomics reveals widespread full phosphorylation site occupancy during mitosis.</title>
        <authorList>
            <person name="Olsen J.V."/>
            <person name="Vermeulen M."/>
            <person name="Santamaria A."/>
            <person name="Kumar C."/>
            <person name="Miller M.L."/>
            <person name="Jensen L.J."/>
            <person name="Gnad F."/>
            <person name="Cox J."/>
            <person name="Jensen T.S."/>
            <person name="Nigg E.A."/>
            <person name="Brunak S."/>
            <person name="Mann M."/>
        </authorList>
    </citation>
    <scope>PHOSPHORYLATION [LARGE SCALE ANALYSIS] AT SER-122 AND SER-148</scope>
    <scope>IDENTIFICATION BY MASS SPECTROMETRY [LARGE SCALE ANALYSIS]</scope>
    <source>
        <tissue>Cervix carcinoma</tissue>
    </source>
</reference>
<reference key="12">
    <citation type="journal article" date="2011" name="BMC Syst. Biol.">
        <title>Initial characterization of the human central proteome.</title>
        <authorList>
            <person name="Burkard T.R."/>
            <person name="Planyavsky M."/>
            <person name="Kaupe I."/>
            <person name="Breitwieser F.P."/>
            <person name="Buerckstuemmer T."/>
            <person name="Bennett K.L."/>
            <person name="Superti-Furga G."/>
            <person name="Colinge J."/>
        </authorList>
    </citation>
    <scope>IDENTIFICATION BY MASS SPECTROMETRY [LARGE SCALE ANALYSIS]</scope>
</reference>
<reference key="13">
    <citation type="journal article" date="2011" name="Mol. Neurodegener.">
        <title>A novel neuron-enriched protein SDIM1 is down regulated in Alzheimer's brains and attenuates cell death induced by DNAJB4 over-expression in neuro-progenitor cells.</title>
        <authorList>
            <person name="Lei J.X."/>
            <person name="Cassone C.G."/>
            <person name="Luebbert C."/>
            <person name="Liu Q.Y."/>
        </authorList>
    </citation>
    <scope>INTERACTION WITH SDIM1</scope>
</reference>
<reference key="14">
    <citation type="journal article" date="2014" name="J. Biol. Chem.">
        <title>Binding of human nucleotide exchange factors to heat shock protein 70 (Hsp70) generates functionally distinct complexes in vitro.</title>
        <authorList>
            <person name="Rauch J.N."/>
            <person name="Gestwicki J.E."/>
        </authorList>
    </citation>
    <scope>FUNCTION</scope>
</reference>
<reference key="15">
    <citation type="journal article" date="2022" name="Sci. Rep.">
        <title>The diagnostic yield, candidate genes, and pitfalls for a genetic study of intellectual disability in 118 middle eastern families.</title>
        <authorList>
            <person name="Al-Kasbi G."/>
            <person name="Al-Murshedi F."/>
            <person name="Al-Kindi A."/>
            <person name="Al-Hashimi N."/>
            <person name="Al-Thihli K."/>
            <person name="Al-Saegh A."/>
            <person name="Al-Futaisi A."/>
            <person name="Al-Mamari W."/>
            <person name="Al-Asmi A."/>
            <person name="Bruwer Z."/>
            <person name="Al-Kharusi K."/>
            <person name="Al-Rashdi S."/>
            <person name="Zadjali F."/>
            <person name="Al-Yahyaee S."/>
            <person name="Al-Maawali A."/>
        </authorList>
    </citation>
    <scope>INVOLVEMENT IN CMYO21</scope>
    <scope>VARIANT CMYO21 GLY-61</scope>
</reference>
<reference key="16">
    <citation type="journal article" date="2023" name="Acta Neuropathol.">
        <title>Loss of function variants in DNAJB4 cause a myopathy with early respiratory failure.</title>
        <authorList>
            <person name="Weihl C.C."/>
            <person name="Toepf A."/>
            <person name="Bengoechea R."/>
            <person name="Duff J."/>
            <person name="Charlton R."/>
            <person name="Garcia S.K."/>
            <person name="Dominguez-Gonzalez C."/>
            <person name="Alsaman A."/>
            <person name="Hernandez-Lain A."/>
            <person name="Franco L.V."/>
            <person name="Sanchez M.E.P."/>
            <person name="Beecroft S.J."/>
            <person name="Goullee H."/>
            <person name="Daw J."/>
            <person name="Bhadra A."/>
            <person name="True H."/>
            <person name="Inoue M."/>
            <person name="Findlay A.R."/>
            <person name="Laing N."/>
            <person name="Olive M."/>
            <person name="Ravenscroft G."/>
            <person name="Straub V."/>
        </authorList>
    </citation>
    <scope>VARIANTS CMYO21 GLN-25; SER-262 AND 286-LYS--SER-337 DEL</scope>
    <scope>CHARACTERIZATION OF VARIANTS CMYO21 GLN-25; SER-262 AND 286-LYS--SER-337 DEL</scope>
    <scope>SUBCELLULAR LOCATION</scope>
</reference>
<organism>
    <name type="scientific">Homo sapiens</name>
    <name type="common">Human</name>
    <dbReference type="NCBI Taxonomy" id="9606"/>
    <lineage>
        <taxon>Eukaryota</taxon>
        <taxon>Metazoa</taxon>
        <taxon>Chordata</taxon>
        <taxon>Craniata</taxon>
        <taxon>Vertebrata</taxon>
        <taxon>Euteleostomi</taxon>
        <taxon>Mammalia</taxon>
        <taxon>Eutheria</taxon>
        <taxon>Euarchontoglires</taxon>
        <taxon>Primates</taxon>
        <taxon>Haplorrhini</taxon>
        <taxon>Catarrhini</taxon>
        <taxon>Hominidae</taxon>
        <taxon>Homo</taxon>
    </lineage>
</organism>
<protein>
    <recommendedName>
        <fullName>DnaJ homolog subfamily B member 4</fullName>
    </recommendedName>
    <alternativeName>
        <fullName>Heat shock 40 kDa protein 1 homolog</fullName>
        <shortName>HSP40 homolog</shortName>
        <shortName>Heat shock protein 40 homolog</shortName>
    </alternativeName>
    <alternativeName>
        <fullName>Human liver DnaJ-like protein</fullName>
    </alternativeName>
</protein>
<feature type="initiator methionine" description="Removed" evidence="9">
    <location>
        <position position="1"/>
    </location>
</feature>
<feature type="chain" id="PRO_0000071021" description="DnaJ homolog subfamily B member 4">
    <location>
        <begin position="2"/>
        <end position="337"/>
    </location>
</feature>
<feature type="domain" description="J" evidence="1">
    <location>
        <begin position="2"/>
        <end position="70"/>
    </location>
</feature>
<feature type="modified residue" description="Phosphoserine" evidence="10 11">
    <location>
        <position position="122"/>
    </location>
</feature>
<feature type="modified residue" description="Phosphoserine" evidence="11">
    <location>
        <position position="148"/>
    </location>
</feature>
<feature type="sequence variant" id="VAR_088469" description="In CMYO21; loss of function in chaperone-mediated protein folding; in cells subjected to heat shock, it results in increased protein aggregation and cell death compared to the wild type; unable to complement growth defects in a yeast complementation assay; does not affect subcellular location at the Z line; dbSNP:rs1660297324." evidence="6">
    <original>R</original>
    <variation>Q</variation>
    <location>
        <position position="25"/>
    </location>
</feature>
<feature type="sequence variant" id="VAR_088470" description="In CMYO21; uncertain significance." evidence="7">
    <original>R</original>
    <variation>G</variation>
    <location>
        <position position="61"/>
    </location>
</feature>
<feature type="sequence variant" id="VAR_088471" description="In CMYO21; severely decreased protein abundance in homozygous patient cells; increased degradation." evidence="6">
    <original>L</original>
    <variation>S</variation>
    <location>
        <position position="262"/>
    </location>
</feature>
<feature type="sequence variant" id="VAR_088472" description="In CMYO21; severely decreased protein abundance in homozygous patient cells; increased degradation." evidence="6">
    <location>
        <begin position="286"/>
        <end position="337"/>
    </location>
</feature>
<name>DNJB4_HUMAN</name>
<comment type="function">
    <text evidence="5">Probable chaperone. Stimulates ATP hydrolysis and the folding of unfolded proteins mediated by HSPA1A/B (in vitro) (PubMed:24318877).</text>
</comment>
<comment type="subunit">
    <text evidence="2 4">Homodimer. The C-terminal section interacts with the C-terminal tail of OPRM1. Also interacts with SDIM1.</text>
</comment>
<comment type="interaction">
    <interactant intactId="EBI-356960">
        <id>Q9UDY4</id>
    </interactant>
    <interactant intactId="EBI-930964">
        <id>P54253</id>
        <label>ATXN1</label>
    </interactant>
    <organismsDiffer>false</organismsDiffer>
    <experiments>3</experiments>
</comment>
<comment type="interaction">
    <interactant intactId="EBI-356960">
        <id>Q9UDY4</id>
    </interactant>
    <interactant intactId="EBI-466029">
        <id>P42858</id>
        <label>HTT</label>
    </interactant>
    <organismsDiffer>false</organismsDiffer>
    <experiments>3</experiments>
</comment>
<comment type="interaction">
    <interactant intactId="EBI-356960">
        <id>Q9UDY4</id>
    </interactant>
    <interactant intactId="EBI-352939">
        <id>Q9Y230</id>
        <label>RUVBL2</label>
    </interactant>
    <organismsDiffer>false</organismsDiffer>
    <experiments>3</experiments>
</comment>
<comment type="subcellular location">
    <subcellularLocation>
        <location evidence="3">Cytoplasm</location>
    </subcellularLocation>
    <subcellularLocation>
        <location evidence="2">Cell membrane</location>
    </subcellularLocation>
    <subcellularLocation>
        <location evidence="6">Cytoplasm</location>
        <location evidence="6">Myofibril</location>
        <location evidence="6">Sarcomere</location>
        <location evidence="6">Z line</location>
    </subcellularLocation>
    <text>Cytoplasmic according to PubMed:18837411 and membrane-associated according to PubMed:16542645.</text>
</comment>
<comment type="tissue specificity">
    <text evidence="8">Expressed in heart, pancreas and skeletal muscle, and to a lesser extent in brain, placenta and liver.</text>
</comment>
<comment type="induction">
    <text evidence="8">By heat shock.</text>
</comment>
<comment type="disease" evidence="6 7">
    <disease id="DI-06656">
        <name>Congenital myopathy 21 with early respiratory failure</name>
        <acronym>CMYO21</acronym>
        <description>An autosomal recessive muscle disorder characterized by diaphragmatic weakness, respiratory impairment, and spinal rigidity. Disease onset ranges from early childhood to adulthood and severity is variable. Death from respiratory failure may occur in severe cases. Some affected individuals may show developmental delay and hypertrophic cardiomyopathy.</description>
        <dbReference type="MIM" id="620326"/>
    </disease>
    <text>The disease is caused by variants affecting the gene represented in this entry.</text>
</comment>
<keyword id="KW-1003">Cell membrane</keyword>
<keyword id="KW-0143">Chaperone</keyword>
<keyword id="KW-0963">Cytoplasm</keyword>
<keyword id="KW-0903">Direct protein sequencing</keyword>
<keyword id="KW-0225">Disease variant</keyword>
<keyword id="KW-0472">Membrane</keyword>
<keyword id="KW-0597">Phosphoprotein</keyword>
<keyword id="KW-1267">Proteomics identification</keyword>
<keyword id="KW-1185">Reference proteome</keyword>
<keyword id="KW-0346">Stress response</keyword>
<proteinExistence type="evidence at protein level"/>